<comment type="subcellular location">
    <subcellularLocation>
        <location evidence="2">Cell membrane</location>
        <topology evidence="2">Multi-pass membrane protein</topology>
    </subcellularLocation>
</comment>
<comment type="similarity">
    <text evidence="2">To M.jannaschii MJ0871, MJ1556 and MJ1589.</text>
</comment>
<organism>
    <name type="scientific">Methanocaldococcus jannaschii (strain ATCC 43067 / DSM 2661 / JAL-1 / JCM 10045 / NBRC 100440)</name>
    <name type="common">Methanococcus jannaschii</name>
    <dbReference type="NCBI Taxonomy" id="243232"/>
    <lineage>
        <taxon>Archaea</taxon>
        <taxon>Methanobacteriati</taxon>
        <taxon>Methanobacteriota</taxon>
        <taxon>Methanomada group</taxon>
        <taxon>Methanococci</taxon>
        <taxon>Methanococcales</taxon>
        <taxon>Methanocaldococcaceae</taxon>
        <taxon>Methanocaldococcus</taxon>
    </lineage>
</organism>
<name>Y880_METJA</name>
<accession>Q58290</accession>
<reference key="1">
    <citation type="journal article" date="1996" name="Science">
        <title>Complete genome sequence of the methanogenic archaeon, Methanococcus jannaschii.</title>
        <authorList>
            <person name="Bult C.J."/>
            <person name="White O."/>
            <person name="Olsen G.J."/>
            <person name="Zhou L."/>
            <person name="Fleischmann R.D."/>
            <person name="Sutton G.G."/>
            <person name="Blake J.A."/>
            <person name="FitzGerald L.M."/>
            <person name="Clayton R.A."/>
            <person name="Gocayne J.D."/>
            <person name="Kerlavage A.R."/>
            <person name="Dougherty B.A."/>
            <person name="Tomb J.-F."/>
            <person name="Adams M.D."/>
            <person name="Reich C.I."/>
            <person name="Overbeek R."/>
            <person name="Kirkness E.F."/>
            <person name="Weinstock K.G."/>
            <person name="Merrick J.M."/>
            <person name="Glodek A."/>
            <person name="Scott J.L."/>
            <person name="Geoghagen N.S.M."/>
            <person name="Weidman J.F."/>
            <person name="Fuhrmann J.L."/>
            <person name="Nguyen D."/>
            <person name="Utterback T.R."/>
            <person name="Kelley J.M."/>
            <person name="Peterson J.D."/>
            <person name="Sadow P.W."/>
            <person name="Hanna M.C."/>
            <person name="Cotton M.D."/>
            <person name="Roberts K.M."/>
            <person name="Hurst M.A."/>
            <person name="Kaine B.P."/>
            <person name="Borodovsky M."/>
            <person name="Klenk H.-P."/>
            <person name="Fraser C.M."/>
            <person name="Smith H.O."/>
            <person name="Woese C.R."/>
            <person name="Venter J.C."/>
        </authorList>
    </citation>
    <scope>NUCLEOTIDE SEQUENCE [LARGE SCALE GENOMIC DNA]</scope>
    <source>
        <strain>ATCC 43067 / DSM 2661 / JAL-1 / JCM 10045 / NBRC 100440</strain>
    </source>
</reference>
<proteinExistence type="predicted"/>
<dbReference type="EMBL" id="L77117">
    <property type="protein sequence ID" value="AAB98884.1"/>
    <property type="molecule type" value="Genomic_DNA"/>
</dbReference>
<dbReference type="PIR" id="H64409">
    <property type="entry name" value="H64409"/>
</dbReference>
<dbReference type="RefSeq" id="WP_010870394.1">
    <property type="nucleotide sequence ID" value="NC_000909.1"/>
</dbReference>
<dbReference type="FunCoup" id="Q58290">
    <property type="interactions" value="1"/>
</dbReference>
<dbReference type="STRING" id="243232.MJ_0880"/>
<dbReference type="TCDB" id="9.B.156.2.2">
    <property type="family name" value="the putative 4-10 tms permease (4-10p) family"/>
</dbReference>
<dbReference type="PaxDb" id="243232-MJ_0880"/>
<dbReference type="EnsemblBacteria" id="AAB98884">
    <property type="protein sequence ID" value="AAB98884"/>
    <property type="gene ID" value="MJ_0880"/>
</dbReference>
<dbReference type="GeneID" id="1451769"/>
<dbReference type="KEGG" id="mja:MJ_0880"/>
<dbReference type="eggNOG" id="arCOG00360">
    <property type="taxonomic scope" value="Archaea"/>
</dbReference>
<dbReference type="HOGENOM" id="CLU_048086_2_0_2"/>
<dbReference type="InParanoid" id="Q58290"/>
<dbReference type="OrthoDB" id="62718at2157"/>
<dbReference type="PhylomeDB" id="Q58290"/>
<dbReference type="Proteomes" id="UP000000805">
    <property type="component" value="Chromosome"/>
</dbReference>
<dbReference type="GO" id="GO:0005886">
    <property type="term" value="C:plasma membrane"/>
    <property type="evidence" value="ECO:0007669"/>
    <property type="project" value="UniProtKB-SubCell"/>
</dbReference>
<dbReference type="InterPro" id="IPR011642">
    <property type="entry name" value="Gate_dom"/>
</dbReference>
<dbReference type="InterPro" id="IPR038880">
    <property type="entry name" value="MJ0871-like"/>
</dbReference>
<dbReference type="PANTHER" id="PTHR38139">
    <property type="entry name" value="GATE DOMAIN-CONTAINING PROTEIN"/>
    <property type="match status" value="1"/>
</dbReference>
<dbReference type="PANTHER" id="PTHR38139:SF1">
    <property type="entry name" value="NUCLEOSIDE TRANSPORTER_FEOB GTPASE GATE DOMAIN-CONTAINING PROTEIN"/>
    <property type="match status" value="1"/>
</dbReference>
<dbReference type="Pfam" id="PF07670">
    <property type="entry name" value="Gate"/>
    <property type="match status" value="2"/>
</dbReference>
<keyword id="KW-1003">Cell membrane</keyword>
<keyword id="KW-0472">Membrane</keyword>
<keyword id="KW-1185">Reference proteome</keyword>
<keyword id="KW-0812">Transmembrane</keyword>
<keyword id="KW-1133">Transmembrane helix</keyword>
<gene>
    <name type="ordered locus">MJ0880</name>
</gene>
<feature type="chain" id="PRO_0000107089" description="Uncharacterized protein MJ0880">
    <location>
        <begin position="1"/>
        <end position="308"/>
    </location>
</feature>
<feature type="transmembrane region" description="Helical" evidence="1">
    <location>
        <begin position="10"/>
        <end position="30"/>
    </location>
</feature>
<feature type="transmembrane region" description="Helical" evidence="1">
    <location>
        <begin position="91"/>
        <end position="111"/>
    </location>
</feature>
<feature type="transmembrane region" description="Helical" evidence="1">
    <location>
        <begin position="115"/>
        <end position="135"/>
    </location>
</feature>
<feature type="transmembrane region" description="Helical" evidence="1">
    <location>
        <begin position="178"/>
        <end position="198"/>
    </location>
</feature>
<feature type="transmembrane region" description="Helical" evidence="1">
    <location>
        <begin position="219"/>
        <end position="239"/>
    </location>
</feature>
<feature type="transmembrane region" description="Helical" evidence="1">
    <location>
        <begin position="251"/>
        <end position="271"/>
    </location>
</feature>
<feature type="transmembrane region" description="Helical" evidence="1">
    <location>
        <begin position="288"/>
        <end position="308"/>
    </location>
</feature>
<sequence>MDILPYLTKIILLSSIGITIASIIVETNLISKIKKITKPICLISNLPEECVVSLLGNFINPTVGKSMLSGFYKENKVNEKEVIVTTIISPLPTILGESVFRVQLPLAVVILGYKLGLIYVSLNVISGFLQALIGILYANIFFERRQINIDNNNNEKIVFNREVIIKGFKKSLKILKKVIPMIVIFTLLINFLIKLGLMDVVKGLFSPIFRILDLPGEAITVLIANLAHFSAGYTTVDILIKNGVLNEKQALIVLLIGNIISVTMIYLKHSIGTYISLFGRFGLKLAVINYTISVMIKILLILLLIAFF</sequence>
<evidence type="ECO:0000255" key="1"/>
<evidence type="ECO:0000305" key="2"/>
<protein>
    <recommendedName>
        <fullName>Uncharacterized protein MJ0880</fullName>
    </recommendedName>
</protein>